<organism>
    <name type="scientific">Human astrovirus-4</name>
    <name type="common">HAstV-4</name>
    <dbReference type="NCBI Taxonomy" id="35300"/>
    <lineage>
        <taxon>Viruses</taxon>
        <taxon>Riboviria</taxon>
        <taxon>Orthornavirae</taxon>
        <taxon>Pisuviricota</taxon>
        <taxon>Stelpaviricetes</taxon>
        <taxon>Stellavirales</taxon>
        <taxon>Astroviridae</taxon>
        <taxon>Mamastrovirus</taxon>
        <taxon>Mamastrovirus 1</taxon>
    </lineage>
</organism>
<feature type="chain" id="PRO_0000327277" description="Non-structural polyprotein 1AB">
    <location>
        <begin position="1"/>
        <end position="1415"/>
    </location>
</feature>
<feature type="chain" id="PRO_0000327278" description="Protein p19" evidence="3">
    <location>
        <begin position="1"/>
        <end position="175"/>
    </location>
</feature>
<feature type="chain" id="PRO_0000327279" description="Transmembrane protein 1A" evidence="3">
    <location>
        <begin position="176"/>
        <end position="419"/>
    </location>
</feature>
<feature type="chain" id="PRO_0000327280" description="Serine protease p27" evidence="3">
    <location>
        <begin position="420"/>
        <end position="664"/>
    </location>
</feature>
<feature type="chain" id="PRO_0000419587" description="Viral genome-linked protein" evidence="3">
    <location>
        <begin position="665"/>
        <end position="755"/>
    </location>
</feature>
<feature type="chain" id="PRO_0000327281" description="Protein p20" evidence="3">
    <location>
        <begin position="756"/>
        <end position="912"/>
    </location>
</feature>
<feature type="chain" id="PRO_0000327282" description="RNA-directed RNA polymerase p57" evidence="3">
    <location>
        <begin position="913"/>
        <end position="1415"/>
    </location>
</feature>
<feature type="transmembrane region" description="Helical" evidence="3">
    <location>
        <begin position="154"/>
        <end position="174"/>
    </location>
</feature>
<feature type="transmembrane region" description="Helical" evidence="3">
    <location>
        <begin position="239"/>
        <end position="259"/>
    </location>
</feature>
<feature type="transmembrane region" description="Helical" evidence="3">
    <location>
        <begin position="286"/>
        <end position="306"/>
    </location>
</feature>
<feature type="transmembrane region" description="Helical" evidence="3">
    <location>
        <begin position="313"/>
        <end position="333"/>
    </location>
</feature>
<feature type="transmembrane region" description="Helical" evidence="3">
    <location>
        <begin position="344"/>
        <end position="364"/>
    </location>
</feature>
<feature type="domain" description="RdRp catalytic" evidence="4">
    <location>
        <begin position="1160"/>
        <end position="1286"/>
    </location>
</feature>
<feature type="region of interest" description="Disordered" evidence="5">
    <location>
        <begin position="753"/>
        <end position="813"/>
    </location>
</feature>
<feature type="coiled-coil region" evidence="3">
    <location>
        <begin position="104"/>
        <end position="142"/>
    </location>
</feature>
<feature type="coiled-coil region" evidence="3">
    <location>
        <begin position="587"/>
        <end position="616"/>
    </location>
</feature>
<feature type="compositionally biased region" description="Basic and acidic residues" evidence="5">
    <location>
        <begin position="783"/>
        <end position="795"/>
    </location>
</feature>
<feature type="compositionally biased region" description="Polar residues" evidence="5">
    <location>
        <begin position="800"/>
        <end position="813"/>
    </location>
</feature>
<feature type="active site" description="Charge relay system; for serine protease activity" evidence="1">
    <location>
        <position position="461"/>
    </location>
</feature>
<feature type="active site" description="Charge relay system; for serine protease activity" evidence="1">
    <location>
        <position position="489"/>
    </location>
</feature>
<feature type="active site" description="Charge relay system; for serine protease activity" evidence="1">
    <location>
        <position position="551"/>
    </location>
</feature>
<feature type="site" description="Cleavage" evidence="3">
    <location>
        <begin position="175"/>
        <end position="176"/>
    </location>
</feature>
<feature type="site" description="Cleavage" evidence="3">
    <location>
        <begin position="419"/>
        <end position="420"/>
    </location>
</feature>
<feature type="site" description="Cleavage" evidence="2">
    <location>
        <begin position="664"/>
        <end position="665"/>
    </location>
</feature>
<feature type="site" description="Cleavage" evidence="3">
    <location>
        <begin position="755"/>
        <end position="756"/>
    </location>
</feature>
<feature type="site" description="Cleavage" evidence="3">
    <location>
        <begin position="912"/>
        <end position="913"/>
    </location>
</feature>
<feature type="modified residue" description="O-(5'-phospho-RNA)-tyrosine" evidence="6">
    <location>
        <position position="693"/>
    </location>
</feature>
<organismHost>
    <name type="scientific">Homo sapiens</name>
    <name type="common">Human</name>
    <dbReference type="NCBI Taxonomy" id="9606"/>
</organismHost>
<evidence type="ECO:0000250" key="1"/>
<evidence type="ECO:0000250" key="2">
    <source>
        <dbReference type="UniProtKB" id="P0C6K4"/>
    </source>
</evidence>
<evidence type="ECO:0000255" key="3"/>
<evidence type="ECO:0000255" key="4">
    <source>
        <dbReference type="PROSITE-ProRule" id="PRU00539"/>
    </source>
</evidence>
<evidence type="ECO:0000256" key="5">
    <source>
        <dbReference type="SAM" id="MobiDB-lite"/>
    </source>
</evidence>
<evidence type="ECO:0000269" key="6">
    <source>
    </source>
</evidence>
<evidence type="ECO:0000305" key="7"/>
<evidence type="ECO:0000305" key="8">
    <source>
    </source>
</evidence>
<proteinExistence type="evidence at protein level"/>
<gene>
    <name type="primary">ORF1</name>
</gene>
<sequence length="1415" mass="161278">MAHGEPYYSSKPDKDFNFGSTMARRQMTPTMVAKLPNFVRNSPQAYDWIVRGLIFPTTGKTYFQRVVVITGGLEDGTYGSFVFDGREWVEIYPIEHLNLMSSLKLIHKANALQERLRLSQEEKATLALDVQFLQHENVRLKELIPKPEPRKIQMKWIIVGAVLTFLSLIPGGYAQSQINNTIFTDMIAACKYSTETLTENLDLRIKLALANITISDKLDAVRQILNFAFVPRAHWLRTVFYYIHYYEMWNIFMFVLAIGTVMRSARPGTDLITLATSHLSGFRMAVLPTIPFHTTMTLWVMNTLMVCYYFDNLLAITLAILAPILGIIFLCFMEDSNYVSQIRGLIATAVLIAGGHACLTLTGTTTSLFVVILTCRFIRMATVFIGTRFEIRDANGKVVATVPTRIKNVAFDFFQKLKQSGVRVGVNEFVVIKPGALCVIDTPEGKGTGFFSGNDIVTAAHAVGNNTFVNVCYEGLMYEAKVRYMPEKDIAFITCPGDLHPTARLKLSKNPDYSCVTVMAYVNEDLVVSTAAAMVHGNTLSYAVRTQDGMSGAPVCDKYGRVLAVHQTNTGYTGGAVIIDPTDFHPVKAPSRVELLKEEIERLKAQLNSAAENPATAVTQQPVVTLEQKSVSDSDVVDLVRTAMEREMKVLRDEINGILAPFLQKKKGKTKHGRGRVRRNLRKGVKLLTEEEYRELLEKGLDRETFLDLIDRIIGERSGYPDYDDEDYYDEDDDGWGVVGDDVEFDYTEVINFDQAKPTPAPRTVKPKTCPEPEAETQPLDLSQKKEKQLEHEQQVVKSTKPQKNEPQPYSQTYGKAPIWESYDFDWDEDDAKFILPAPHRLTKADEIVLGSKIVKLRTIIETAIKTQNYSALPEAVFELDKAAYEAGLEGFLQRVKSKKGSKKLQRAPEDQGAQNYHSLDAWKSLLEPPRERRCVPANFPLLGHLPINRPIFDDKKPRDDLLGLLPEPTWHAFEEYGPTTWGPQAFIKSFDKFFYAEPIDFFSEYPQLCAFADWATYREFRYLEDTRVIHITATEKNTDSTPAYPKMNYFDTEENYLEAHGWAPYIREFTRVFKGDKPEVLWYLFLKKEIIKEEKIRNSDIRQIVCADPIYTRIGACLEAHQNALMKQHTDTSVGQCGWSPMEGGFKKTMQRLVNKGNKHFIEFDWTRYDGTIPPALFKHIKEIRWNFINKDQREKYKHVHEWYVDNLLNRHVLLPSGEVTLQTRGNPSGQFSTTMDNNMVNFWSQAFEFAYFNGPDKDLWKTYDTVVYGDDRLSTTPSVPDDYEERVINMYRDIFGMWVKPGKVICRDSIVGLSFCGFTVNENLEPVPTSPEKLMASLLKPYKILPDLESLHGKLLCYQLLAAFMAEDHPFKVYVEHCLSRTAKQLRDSGLPARLTEEQLHRIWRGGPKKCDG</sequence>
<keyword id="KW-0067">ATP-binding</keyword>
<keyword id="KW-0175">Coiled coil</keyword>
<keyword id="KW-0191">Covalent protein-RNA linkage</keyword>
<keyword id="KW-0903">Direct protein sequencing</keyword>
<keyword id="KW-1043">Host membrane</keyword>
<keyword id="KW-0378">Hydrolase</keyword>
<keyword id="KW-0472">Membrane</keyword>
<keyword id="KW-0547">Nucleotide-binding</keyword>
<keyword id="KW-0548">Nucleotidyltransferase</keyword>
<keyword id="KW-0597">Phosphoprotein</keyword>
<keyword id="KW-0645">Protease</keyword>
<keyword id="KW-0688">Ribosomal frameshifting</keyword>
<keyword id="KW-0696">RNA-directed RNA polymerase</keyword>
<keyword id="KW-0720">Serine protease</keyword>
<keyword id="KW-0808">Transferase</keyword>
<keyword id="KW-0812">Transmembrane</keyword>
<keyword id="KW-1133">Transmembrane helix</keyword>
<keyword id="KW-0693">Viral RNA replication</keyword>
<protein>
    <recommendedName>
        <fullName>Non-structural polyprotein 1AB</fullName>
    </recommendedName>
    <component>
        <recommendedName>
            <fullName>Protein p19</fullName>
        </recommendedName>
    </component>
    <component>
        <recommendedName>
            <fullName>Transmembrane protein 1A</fullName>
        </recommendedName>
    </component>
    <component>
        <recommendedName>
            <fullName>Serine protease p27</fullName>
            <shortName>p27</shortName>
            <ecNumber evidence="2">3.4.21.-</ecNumber>
        </recommendedName>
    </component>
    <component>
        <recommendedName>
            <fullName>Viral genome-linked protein</fullName>
        </recommendedName>
        <alternativeName>
            <fullName>VPg</fullName>
        </alternativeName>
    </component>
    <component>
        <recommendedName>
            <fullName>Protein p20</fullName>
        </recommendedName>
    </component>
    <component>
        <recommendedName>
            <fullName>RNA-directed RNA polymerase p57</fullName>
            <shortName>p57</shortName>
            <ecNumber>2.7.7.48</ecNumber>
        </recommendedName>
    </component>
</protein>
<accession>Q3ZN06</accession>
<dbReference type="EC" id="3.4.21.-" evidence="2"/>
<dbReference type="EC" id="2.7.7.48"/>
<dbReference type="EMBL" id="AY720891">
    <property type="protein sequence ID" value="AAW51878.1"/>
    <property type="status" value="ALT_SEQ"/>
    <property type="molecule type" value="Genomic_RNA"/>
</dbReference>
<dbReference type="SMR" id="Q3ZN06"/>
<dbReference type="Proteomes" id="UP000009176">
    <property type="component" value="Genome"/>
</dbReference>
<dbReference type="GO" id="GO:0033644">
    <property type="term" value="C:host cell membrane"/>
    <property type="evidence" value="ECO:0007669"/>
    <property type="project" value="UniProtKB-SubCell"/>
</dbReference>
<dbReference type="GO" id="GO:0016020">
    <property type="term" value="C:membrane"/>
    <property type="evidence" value="ECO:0007669"/>
    <property type="project" value="UniProtKB-KW"/>
</dbReference>
<dbReference type="GO" id="GO:0005524">
    <property type="term" value="F:ATP binding"/>
    <property type="evidence" value="ECO:0007669"/>
    <property type="project" value="UniProtKB-KW"/>
</dbReference>
<dbReference type="GO" id="GO:0003723">
    <property type="term" value="F:RNA binding"/>
    <property type="evidence" value="ECO:0007669"/>
    <property type="project" value="InterPro"/>
</dbReference>
<dbReference type="GO" id="GO:0003968">
    <property type="term" value="F:RNA-directed RNA polymerase activity"/>
    <property type="evidence" value="ECO:0007669"/>
    <property type="project" value="UniProtKB-KW"/>
</dbReference>
<dbReference type="GO" id="GO:0004252">
    <property type="term" value="F:serine-type endopeptidase activity"/>
    <property type="evidence" value="ECO:0007669"/>
    <property type="project" value="InterPro"/>
</dbReference>
<dbReference type="GO" id="GO:0070008">
    <property type="term" value="F:serine-type exopeptidase activity"/>
    <property type="evidence" value="ECO:0007669"/>
    <property type="project" value="InterPro"/>
</dbReference>
<dbReference type="GO" id="GO:0006351">
    <property type="term" value="P:DNA-templated transcription"/>
    <property type="evidence" value="ECO:0007669"/>
    <property type="project" value="InterPro"/>
</dbReference>
<dbReference type="GO" id="GO:0006508">
    <property type="term" value="P:proteolysis"/>
    <property type="evidence" value="ECO:0007669"/>
    <property type="project" value="UniProtKB-KW"/>
</dbReference>
<dbReference type="GO" id="GO:0039694">
    <property type="term" value="P:viral RNA genome replication"/>
    <property type="evidence" value="ECO:0007669"/>
    <property type="project" value="InterPro"/>
</dbReference>
<dbReference type="GO" id="GO:0075523">
    <property type="term" value="P:viral translational frameshifting"/>
    <property type="evidence" value="ECO:0007669"/>
    <property type="project" value="UniProtKB-KW"/>
</dbReference>
<dbReference type="CDD" id="cd23172">
    <property type="entry name" value="ps-ssRNAv_Astroviridae_RdRp"/>
    <property type="match status" value="1"/>
</dbReference>
<dbReference type="Gene3D" id="3.30.70.270">
    <property type="match status" value="1"/>
</dbReference>
<dbReference type="Gene3D" id="2.40.10.10">
    <property type="entry name" value="Trypsin-like serine proteases"/>
    <property type="match status" value="2"/>
</dbReference>
<dbReference type="InterPro" id="IPR045835">
    <property type="entry name" value="Astro_1A"/>
</dbReference>
<dbReference type="InterPro" id="IPR045833">
    <property type="entry name" value="Astro_p19"/>
</dbReference>
<dbReference type="InterPro" id="IPR045836">
    <property type="entry name" value="Astro_VPg"/>
</dbReference>
<dbReference type="InterPro" id="IPR043502">
    <property type="entry name" value="DNA/RNA_pol_sf"/>
</dbReference>
<dbReference type="InterPro" id="IPR022068">
    <property type="entry name" value="Mamastrovirus_p20"/>
</dbReference>
<dbReference type="InterPro" id="IPR009003">
    <property type="entry name" value="Peptidase_S1_PA"/>
</dbReference>
<dbReference type="InterPro" id="IPR043504">
    <property type="entry name" value="Peptidase_S1_PA_chymotrypsin"/>
</dbReference>
<dbReference type="InterPro" id="IPR043128">
    <property type="entry name" value="Rev_trsase/Diguanyl_cyclase"/>
</dbReference>
<dbReference type="InterPro" id="IPR001205">
    <property type="entry name" value="RNA-dir_pol_C"/>
</dbReference>
<dbReference type="InterPro" id="IPR007094">
    <property type="entry name" value="RNA-dir_pol_PSvirus"/>
</dbReference>
<dbReference type="Pfam" id="PF19415">
    <property type="entry name" value="Astro_1A"/>
    <property type="match status" value="1"/>
</dbReference>
<dbReference type="Pfam" id="PF19414">
    <property type="entry name" value="Astro_p19"/>
    <property type="match status" value="1"/>
</dbReference>
<dbReference type="Pfam" id="PF19416">
    <property type="entry name" value="Astro_VPg"/>
    <property type="match status" value="1"/>
</dbReference>
<dbReference type="Pfam" id="PF12285">
    <property type="entry name" value="Astrovir_pp_1"/>
    <property type="match status" value="1"/>
</dbReference>
<dbReference type="Pfam" id="PF00680">
    <property type="entry name" value="RdRP_1"/>
    <property type="match status" value="1"/>
</dbReference>
<dbReference type="Pfam" id="PF13365">
    <property type="entry name" value="Trypsin_2"/>
    <property type="match status" value="1"/>
</dbReference>
<dbReference type="SUPFAM" id="SSF56672">
    <property type="entry name" value="DNA/RNA polymerases"/>
    <property type="match status" value="1"/>
</dbReference>
<dbReference type="SUPFAM" id="SSF50494">
    <property type="entry name" value="Trypsin-like serine proteases"/>
    <property type="match status" value="1"/>
</dbReference>
<dbReference type="PROSITE" id="PS50507">
    <property type="entry name" value="RDRP_SSRNA_POS"/>
    <property type="match status" value="1"/>
</dbReference>
<name>NS1AB_HASV4</name>
<comment type="function">
    <molecule>Serine protease p27</molecule>
    <text evidence="2">Responsible for the cleavage of the polyprotein into functional products.</text>
</comment>
<comment type="function">
    <molecule>Viral genome-linked protein</molecule>
    <text evidence="6 8">Covalently attached to the 5' extremity of the genomic and subgenomic RNAs (PubMed:22787221). It may serve as a primer for the replicase (Probable).</text>
</comment>
<comment type="catalytic activity">
    <reaction evidence="4">
        <text>RNA(n) + a ribonucleoside 5'-triphosphate = RNA(n+1) + diphosphate</text>
        <dbReference type="Rhea" id="RHEA:21248"/>
        <dbReference type="Rhea" id="RHEA-COMP:14527"/>
        <dbReference type="Rhea" id="RHEA-COMP:17342"/>
        <dbReference type="ChEBI" id="CHEBI:33019"/>
        <dbReference type="ChEBI" id="CHEBI:61557"/>
        <dbReference type="ChEBI" id="CHEBI:140395"/>
        <dbReference type="EC" id="2.7.7.48"/>
    </reaction>
</comment>
<comment type="subunit">
    <molecule>Serine protease p27</molecule>
    <text evidence="2">Monomer.</text>
</comment>
<comment type="subcellular location">
    <molecule>Transmembrane protein 1A</molecule>
    <subcellularLocation>
        <location evidence="7">Host membrane</location>
        <topology evidence="7">Multi-pass membrane protein</topology>
    </subcellularLocation>
</comment>
<comment type="alternative products">
    <event type="ribosomal frameshifting"/>
    <isoform>
        <id>Q3ZN06-1</id>
        <name>nsp1ab</name>
        <sequence type="displayed"/>
    </isoform>
    <isoform>
        <id>Q3ZN07-1</id>
        <name>nsp1a</name>
        <sequence type="external"/>
    </isoform>
</comment>
<comment type="PTM">
    <text evidence="2">Cleaved by the viral and host proteases (By similarity). The protease is probably autocatalytically cleaved (By similarity).</text>
</comment>
<comment type="miscellaneous">
    <molecule>Isoform nsp1ab</molecule>
    <text>Generated by a ribosomal frameshift at position 900.</text>
</comment>
<comment type="similarity">
    <text evidence="7">Belongs to the astroviridae polyprotein 1AB family.</text>
</comment>
<reference key="1">
    <citation type="submission" date="2004-08" db="EMBL/GenBank/DDBJ databases">
        <title>Molecular characterization of human astrovirus type 4.</title>
        <authorList>
            <person name="Barthel J."/>
            <person name="Rethwilm A."/>
            <person name="Rohayem J."/>
        </authorList>
    </citation>
    <scope>NUCLEOTIDE SEQUENCE [GENOMIC RNA]</scope>
    <source>
        <strain>Isolate Dresden</strain>
    </source>
</reference>
<reference key="2">
    <citation type="journal article" date="2012" name="J. Virol.">
        <title>Identification of human astrovirus genome-linked protein (VPg) essential for viral infectivity.</title>
        <authorList>
            <person name="Fuentes C."/>
            <person name="Bosch A."/>
            <person name="Pinto R.M."/>
            <person name="Guix S."/>
        </authorList>
    </citation>
    <scope>PROTEIN SEQUENCE OF 699-713</scope>
    <scope>IDENTIFICATION (VIRAL GENOME-LINKED PROTEIN)</scope>
    <scope>FUNCTION (VIRAL GENOME-LINKED PROTEIN)</scope>
    <scope>MUTAGENESIS OF TYR-693; TYR-720; TYR-723; TYR-728; TYR-729 AND TYR-747</scope>
    <scope>COVALENT RNA LINKAGE AT TYR-693</scope>
</reference>